<protein>
    <recommendedName>
        <fullName evidence="1">tRNA-cytidine(32) 2-sulfurtransferase</fullName>
        <ecNumber evidence="1">2.8.1.-</ecNumber>
    </recommendedName>
    <alternativeName>
        <fullName evidence="1">Two-thiocytidine biosynthesis protein A</fullName>
    </alternativeName>
    <alternativeName>
        <fullName evidence="1">tRNA 2-thiocytidine biosynthesis protein TtcA</fullName>
    </alternativeName>
</protein>
<evidence type="ECO:0000255" key="1">
    <source>
        <dbReference type="HAMAP-Rule" id="MF_01850"/>
    </source>
</evidence>
<accession>Q32GI6</accession>
<comment type="function">
    <text evidence="1">Catalyzes the ATP-dependent 2-thiolation of cytidine in position 32 of tRNA, to form 2-thiocytidine (s(2)C32). The sulfur atoms are provided by the cysteine/cysteine desulfurase (IscS) system.</text>
</comment>
<comment type="catalytic activity">
    <reaction evidence="1">
        <text>cytidine(32) in tRNA + S-sulfanyl-L-cysteinyl-[cysteine desulfurase] + AH2 + ATP = 2-thiocytidine(32) in tRNA + L-cysteinyl-[cysteine desulfurase] + A + AMP + diphosphate + H(+)</text>
        <dbReference type="Rhea" id="RHEA:57048"/>
        <dbReference type="Rhea" id="RHEA-COMP:10288"/>
        <dbReference type="Rhea" id="RHEA-COMP:12157"/>
        <dbReference type="Rhea" id="RHEA-COMP:12158"/>
        <dbReference type="Rhea" id="RHEA-COMP:14821"/>
        <dbReference type="ChEBI" id="CHEBI:13193"/>
        <dbReference type="ChEBI" id="CHEBI:15378"/>
        <dbReference type="ChEBI" id="CHEBI:17499"/>
        <dbReference type="ChEBI" id="CHEBI:29950"/>
        <dbReference type="ChEBI" id="CHEBI:30616"/>
        <dbReference type="ChEBI" id="CHEBI:33019"/>
        <dbReference type="ChEBI" id="CHEBI:61963"/>
        <dbReference type="ChEBI" id="CHEBI:82748"/>
        <dbReference type="ChEBI" id="CHEBI:141453"/>
        <dbReference type="ChEBI" id="CHEBI:456215"/>
    </reaction>
    <physiologicalReaction direction="left-to-right" evidence="1">
        <dbReference type="Rhea" id="RHEA:57049"/>
    </physiologicalReaction>
</comment>
<comment type="cofactor">
    <cofactor evidence="1">
        <name>Mg(2+)</name>
        <dbReference type="ChEBI" id="CHEBI:18420"/>
    </cofactor>
</comment>
<comment type="cofactor">
    <cofactor evidence="1">
        <name>[4Fe-4S] cluster</name>
        <dbReference type="ChEBI" id="CHEBI:49883"/>
    </cofactor>
    <text evidence="1">Binds 1 [4Fe-4S] cluster per subunit. The cluster is chelated by three Cys residues, the fourth Fe has a free coordination site that may bind a sulfur atom transferred from the persulfide of IscS.</text>
</comment>
<comment type="pathway">
    <text evidence="1">tRNA modification.</text>
</comment>
<comment type="subunit">
    <text evidence="1">Homodimer.</text>
</comment>
<comment type="subcellular location">
    <subcellularLocation>
        <location evidence="1">Cytoplasm</location>
    </subcellularLocation>
</comment>
<comment type="miscellaneous">
    <text evidence="1">The thiolation reaction likely consists of two steps: a first activation step by ATP to form an adenylated intermediate of the target base of tRNA, and a second nucleophilic substitution step of the sulfur (S) atom supplied by the hydrosulfide attached to the Fe-S cluster.</text>
</comment>
<comment type="similarity">
    <text evidence="1">Belongs to the TtcA family.</text>
</comment>
<reference key="1">
    <citation type="journal article" date="2005" name="Nucleic Acids Res.">
        <title>Genome dynamics and diversity of Shigella species, the etiologic agents of bacillary dysentery.</title>
        <authorList>
            <person name="Yang F."/>
            <person name="Yang J."/>
            <person name="Zhang X."/>
            <person name="Chen L."/>
            <person name="Jiang Y."/>
            <person name="Yan Y."/>
            <person name="Tang X."/>
            <person name="Wang J."/>
            <person name="Xiong Z."/>
            <person name="Dong J."/>
            <person name="Xue Y."/>
            <person name="Zhu Y."/>
            <person name="Xu X."/>
            <person name="Sun L."/>
            <person name="Chen S."/>
            <person name="Nie H."/>
            <person name="Peng J."/>
            <person name="Xu J."/>
            <person name="Wang Y."/>
            <person name="Yuan Z."/>
            <person name="Wen Y."/>
            <person name="Yao Z."/>
            <person name="Shen Y."/>
            <person name="Qiang B."/>
            <person name="Hou Y."/>
            <person name="Yu J."/>
            <person name="Jin Q."/>
        </authorList>
    </citation>
    <scope>NUCLEOTIDE SEQUENCE [LARGE SCALE GENOMIC DNA]</scope>
    <source>
        <strain>Sd197</strain>
    </source>
</reference>
<feature type="chain" id="PRO_0000348850" description="tRNA-cytidine(32) 2-sulfurtransferase">
    <location>
        <begin position="1"/>
        <end position="311"/>
    </location>
</feature>
<feature type="short sequence motif" description="PP-loop motif" evidence="1">
    <location>
        <begin position="47"/>
        <end position="52"/>
    </location>
</feature>
<feature type="binding site" evidence="1">
    <location>
        <position position="122"/>
    </location>
    <ligand>
        <name>[4Fe-4S] cluster</name>
        <dbReference type="ChEBI" id="CHEBI:49883"/>
    </ligand>
</feature>
<feature type="binding site" evidence="1">
    <location>
        <position position="125"/>
    </location>
    <ligand>
        <name>[4Fe-4S] cluster</name>
        <dbReference type="ChEBI" id="CHEBI:49883"/>
    </ligand>
</feature>
<feature type="binding site" evidence="1">
    <location>
        <position position="213"/>
    </location>
    <ligand>
        <name>[4Fe-4S] cluster</name>
        <dbReference type="ChEBI" id="CHEBI:49883"/>
    </ligand>
</feature>
<name>TTCA_SHIDS</name>
<gene>
    <name evidence="1" type="primary">ttcA</name>
    <name type="ordered locus">SDY_1426</name>
</gene>
<proteinExistence type="inferred from homology"/>
<dbReference type="EC" id="2.8.1.-" evidence="1"/>
<dbReference type="EMBL" id="CP000034">
    <property type="protein sequence ID" value="ABB61569.1"/>
    <property type="molecule type" value="Genomic_DNA"/>
</dbReference>
<dbReference type="RefSeq" id="WP_001157400.1">
    <property type="nucleotide sequence ID" value="NC_007606.1"/>
</dbReference>
<dbReference type="RefSeq" id="YP_403060.1">
    <property type="nucleotide sequence ID" value="NC_007606.1"/>
</dbReference>
<dbReference type="SMR" id="Q32GI6"/>
<dbReference type="STRING" id="300267.SDY_1426"/>
<dbReference type="EnsemblBacteria" id="ABB61569">
    <property type="protein sequence ID" value="ABB61569"/>
    <property type="gene ID" value="SDY_1426"/>
</dbReference>
<dbReference type="KEGG" id="sdy:SDY_1426"/>
<dbReference type="PATRIC" id="fig|300267.13.peg.1697"/>
<dbReference type="HOGENOM" id="CLU_026481_0_0_6"/>
<dbReference type="Proteomes" id="UP000002716">
    <property type="component" value="Chromosome"/>
</dbReference>
<dbReference type="GO" id="GO:0005737">
    <property type="term" value="C:cytoplasm"/>
    <property type="evidence" value="ECO:0007669"/>
    <property type="project" value="UniProtKB-SubCell"/>
</dbReference>
<dbReference type="GO" id="GO:0051539">
    <property type="term" value="F:4 iron, 4 sulfur cluster binding"/>
    <property type="evidence" value="ECO:0007669"/>
    <property type="project" value="UniProtKB-UniRule"/>
</dbReference>
<dbReference type="GO" id="GO:0005524">
    <property type="term" value="F:ATP binding"/>
    <property type="evidence" value="ECO:0007669"/>
    <property type="project" value="UniProtKB-UniRule"/>
</dbReference>
<dbReference type="GO" id="GO:0000287">
    <property type="term" value="F:magnesium ion binding"/>
    <property type="evidence" value="ECO:0007669"/>
    <property type="project" value="UniProtKB-UniRule"/>
</dbReference>
<dbReference type="GO" id="GO:0016783">
    <property type="term" value="F:sulfurtransferase activity"/>
    <property type="evidence" value="ECO:0007669"/>
    <property type="project" value="UniProtKB-UniRule"/>
</dbReference>
<dbReference type="GO" id="GO:0000049">
    <property type="term" value="F:tRNA binding"/>
    <property type="evidence" value="ECO:0007669"/>
    <property type="project" value="UniProtKB-KW"/>
</dbReference>
<dbReference type="GO" id="GO:0034227">
    <property type="term" value="P:tRNA thio-modification"/>
    <property type="evidence" value="ECO:0007669"/>
    <property type="project" value="UniProtKB-UniRule"/>
</dbReference>
<dbReference type="CDD" id="cd24138">
    <property type="entry name" value="TtcA-like"/>
    <property type="match status" value="1"/>
</dbReference>
<dbReference type="FunFam" id="3.40.50.620:FF:000046">
    <property type="entry name" value="tRNA-cytidine(32) 2-sulfurtransferase"/>
    <property type="match status" value="1"/>
</dbReference>
<dbReference type="Gene3D" id="3.40.50.620">
    <property type="entry name" value="HUPs"/>
    <property type="match status" value="1"/>
</dbReference>
<dbReference type="HAMAP" id="MF_01850">
    <property type="entry name" value="TtcA"/>
    <property type="match status" value="1"/>
</dbReference>
<dbReference type="InterPro" id="IPR014729">
    <property type="entry name" value="Rossmann-like_a/b/a_fold"/>
</dbReference>
<dbReference type="InterPro" id="IPR011063">
    <property type="entry name" value="TilS/TtcA_N"/>
</dbReference>
<dbReference type="InterPro" id="IPR012089">
    <property type="entry name" value="tRNA_Cyd_32_2_STrfase"/>
</dbReference>
<dbReference type="InterPro" id="IPR035107">
    <property type="entry name" value="tRNA_thiolation_TtcA_Ctu1"/>
</dbReference>
<dbReference type="NCBIfam" id="NF007972">
    <property type="entry name" value="PRK10696.1"/>
    <property type="match status" value="1"/>
</dbReference>
<dbReference type="PANTHER" id="PTHR43686:SF1">
    <property type="entry name" value="AMINOTRAN_5 DOMAIN-CONTAINING PROTEIN"/>
    <property type="match status" value="1"/>
</dbReference>
<dbReference type="PANTHER" id="PTHR43686">
    <property type="entry name" value="SULFURTRANSFERASE-RELATED"/>
    <property type="match status" value="1"/>
</dbReference>
<dbReference type="Pfam" id="PF01171">
    <property type="entry name" value="ATP_bind_3"/>
    <property type="match status" value="1"/>
</dbReference>
<dbReference type="PIRSF" id="PIRSF004976">
    <property type="entry name" value="ATPase_YdaO"/>
    <property type="match status" value="1"/>
</dbReference>
<dbReference type="SUPFAM" id="SSF52402">
    <property type="entry name" value="Adenine nucleotide alpha hydrolases-like"/>
    <property type="match status" value="1"/>
</dbReference>
<keyword id="KW-0004">4Fe-4S</keyword>
<keyword id="KW-0067">ATP-binding</keyword>
<keyword id="KW-0963">Cytoplasm</keyword>
<keyword id="KW-0408">Iron</keyword>
<keyword id="KW-0411">Iron-sulfur</keyword>
<keyword id="KW-0460">Magnesium</keyword>
<keyword id="KW-0479">Metal-binding</keyword>
<keyword id="KW-0547">Nucleotide-binding</keyword>
<keyword id="KW-1185">Reference proteome</keyword>
<keyword id="KW-0694">RNA-binding</keyword>
<keyword id="KW-0808">Transferase</keyword>
<keyword id="KW-0819">tRNA processing</keyword>
<keyword id="KW-0820">tRNA-binding</keyword>
<sequence length="311" mass="35517">MQENQQITKKEQYNLNKLQKRLRRNVGEAIADFNMIEEGDRIMVCLSGGKDSYTMLEILRNLQQSAPINFSLVAVNLDQKQPGFPEHVLLEYLEKLGVEYKIVEENTYGIVKEKIPEGKTTCSLCSRLRRGILYRTATELGATKIALGHHRDDILQTLFLNMFYGGKMKGMPPKLMSDDGKHIVIRPLAYCREKDIQRFADAKAFPIIPCNLCGSQPNLQRQVIADMLRDWDKRYPGRIETMFSAMQNVVPSHLCDSNLFDFKGITHGSEVVNGGDLAFDREEIPLQPAGWQPEEDENQLDELRLNVVEVK</sequence>
<organism>
    <name type="scientific">Shigella dysenteriae serotype 1 (strain Sd197)</name>
    <dbReference type="NCBI Taxonomy" id="300267"/>
    <lineage>
        <taxon>Bacteria</taxon>
        <taxon>Pseudomonadati</taxon>
        <taxon>Pseudomonadota</taxon>
        <taxon>Gammaproteobacteria</taxon>
        <taxon>Enterobacterales</taxon>
        <taxon>Enterobacteriaceae</taxon>
        <taxon>Shigella</taxon>
    </lineage>
</organism>